<evidence type="ECO:0000250" key="1"/>
<evidence type="ECO:0000305" key="2"/>
<feature type="chain" id="PRO_0000161577" description="Putative carboxymethylenebutenolidase">
    <location>
        <begin position="1"/>
        <end position="231"/>
    </location>
</feature>
<feature type="active site" evidence="1">
    <location>
        <position position="169"/>
    </location>
</feature>
<feature type="active site" evidence="1">
    <location>
        <position position="200"/>
    </location>
</feature>
<comment type="catalytic activity">
    <reaction>
        <text>2-(5-oxo-2,5-dihydrofuran-2-ylidene)acetate + H2O = 4-oxohex-2-enedioate + H(+)</text>
        <dbReference type="Rhea" id="RHEA:12372"/>
        <dbReference type="ChEBI" id="CHEBI:12040"/>
        <dbReference type="ChEBI" id="CHEBI:15377"/>
        <dbReference type="ChEBI" id="CHEBI:15378"/>
        <dbReference type="ChEBI" id="CHEBI:57263"/>
        <dbReference type="EC" id="3.1.1.45"/>
    </reaction>
</comment>
<comment type="similarity">
    <text evidence="2">Belongs to the dienelactone hydrolase family.</text>
</comment>
<sequence length="231" mass="24866">MTDISIPAGDDGSFSAYVAKPAGGGPAPGLVVIQEIFGVNQVMRDLCDAFAAQGWLAVCPDLFWRQEPGVQITDKTQEEWNRAFALMNGMDQDKRWTTSRPPCRGCARIRIAPAKRVGRLLLGRRLAFMMAARSDSDANVSYYGVGLDGLVGEAASITKPLLMHIAEKDQFVPAEAREKVLAAVKGNPNVTAHVYPGVDHAFARAGGAHFEPEAAELANGRTAAFFKQHLG</sequence>
<protein>
    <recommendedName>
        <fullName>Putative carboxymethylenebutenolidase</fullName>
        <ecNumber>3.1.1.45</ecNumber>
    </recommendedName>
    <alternativeName>
        <fullName>Dienelactone hydrolase</fullName>
        <shortName>DLH</shortName>
    </alternativeName>
</protein>
<accession>Q43914</accession>
<keyword id="KW-0378">Hydrolase</keyword>
<reference key="1">
    <citation type="journal article" date="1994" name="FEMS Microbiol. Lett.">
        <title>Identification and sequencing of pyrG, the CTP synthetase gene of Azospirillum brasilense Sp7.</title>
        <authorList>
            <person name="Zimmer W."/>
            <person name="Hundeshagen B."/>
        </authorList>
    </citation>
    <scope>NUCLEOTIDE SEQUENCE [GENOMIC DNA]</scope>
    <source>
        <strain>ATCC 29145 / DSM 1690 / IMET 11303 / Sp7</strain>
    </source>
</reference>
<proteinExistence type="inferred from homology"/>
<organism>
    <name type="scientific">Azospirillum brasilense</name>
    <dbReference type="NCBI Taxonomy" id="192"/>
    <lineage>
        <taxon>Bacteria</taxon>
        <taxon>Pseudomonadati</taxon>
        <taxon>Pseudomonadota</taxon>
        <taxon>Alphaproteobacteria</taxon>
        <taxon>Rhodospirillales</taxon>
        <taxon>Azospirillaceae</taxon>
        <taxon>Azospirillum</taxon>
    </lineage>
</organism>
<name>DLHH_AZOBR</name>
<dbReference type="EC" id="3.1.1.45"/>
<dbReference type="EMBL" id="X67216">
    <property type="protein sequence ID" value="CAA47657.1"/>
    <property type="molecule type" value="Genomic_DNA"/>
</dbReference>
<dbReference type="PIR" id="I39497">
    <property type="entry name" value="I39497"/>
</dbReference>
<dbReference type="SMR" id="Q43914"/>
<dbReference type="ESTHER" id="azobr-dlhh">
    <property type="family name" value="Dienelactone_hydrolase"/>
</dbReference>
<dbReference type="GO" id="GO:0008806">
    <property type="term" value="F:carboxymethylenebutenolidase activity"/>
    <property type="evidence" value="ECO:0007669"/>
    <property type="project" value="UniProtKB-EC"/>
</dbReference>
<dbReference type="Gene3D" id="3.40.50.1820">
    <property type="entry name" value="alpha/beta hydrolase"/>
    <property type="match status" value="2"/>
</dbReference>
<dbReference type="InterPro" id="IPR029058">
    <property type="entry name" value="AB_hydrolase_fold"/>
</dbReference>
<dbReference type="InterPro" id="IPR002925">
    <property type="entry name" value="Dienelactn_hydro"/>
</dbReference>
<dbReference type="InterPro" id="IPR051049">
    <property type="entry name" value="Dienelactone_hydrolase-like"/>
</dbReference>
<dbReference type="PANTHER" id="PTHR46623:SF6">
    <property type="entry name" value="ALPHA_BETA-HYDROLASES SUPERFAMILY PROTEIN"/>
    <property type="match status" value="1"/>
</dbReference>
<dbReference type="PANTHER" id="PTHR46623">
    <property type="entry name" value="CARBOXYMETHYLENEBUTENOLIDASE-RELATED"/>
    <property type="match status" value="1"/>
</dbReference>
<dbReference type="Pfam" id="PF01738">
    <property type="entry name" value="DLH"/>
    <property type="match status" value="1"/>
</dbReference>
<dbReference type="SUPFAM" id="SSF53474">
    <property type="entry name" value="alpha/beta-Hydrolases"/>
    <property type="match status" value="1"/>
</dbReference>